<accession>A0A411PQN9</accession>
<comment type="function">
    <text evidence="2">Transcriptional coactivator; part of the gene cluster that mediates the biosynthesis of agnestins, dihydroxy-xanthone metabolites.</text>
</comment>
<comment type="subcellular location">
    <subcellularLocation>
        <location evidence="4">Nucleus</location>
    </subcellularLocation>
</comment>
<sequence>MADFAQLEVYIGDLSTAITSLITQCQRNGHATGSPSENLSRLFGLEAPTEAHRARESALVILTKLQIMLAGPTDLLQQMTIQTQLLACIRWLGEFQVPACIPLDGSALMKDVSELIDVPENQLGRIVRMAATCGFLREPEPGHITHSALSASFVTNPSYLDAAMFLAETAAPAALDMVAATKQRLGSSEPASQNVVFDQGFFSAANKTQLRRLQRQWQAYLRHGMAHLCDITTDFLTCLEPLRMGNASIVEVGARSAERAMALVDQYPTLHFTVQLSPASTLSSASKNGTAASKVRHPRIRVQHRVPGTPQPIQDAMVYIINFPVPEPGVSYNSPVAQISAELRAHLAPLRMNRSATIVLTAPSLPERGNVAAVGVARIRDLSLLQLANEQEVEMSDLLSLLNGVGDGEGRLVLVNEMRSAGNHGAVALEVKYQSYTDR</sequence>
<feature type="chain" id="PRO_0000449021" description="Agnestins biosynthesis cluster transcriptional coactivator AgnL9">
    <location>
        <begin position="1"/>
        <end position="439"/>
    </location>
</feature>
<feature type="domain" description="HTH iclR-type" evidence="1">
    <location>
        <begin position="79"/>
        <end position="149"/>
    </location>
</feature>
<feature type="DNA-binding region" description="H-T-H motif" evidence="1">
    <location>
        <begin position="109"/>
        <end position="128"/>
    </location>
</feature>
<reference key="1">
    <citation type="journal article" date="2019" name="Chem. Sci.">
        <title>Characterisation of the biosynthetic pathway to agnestins A and B reveals the reductive route to chrysophanol in fungi.</title>
        <authorList>
            <person name="Szwalbe A.J."/>
            <person name="Williams K."/>
            <person name="Song Z."/>
            <person name="de Mattos-Shipley K."/>
            <person name="Vincent J.L."/>
            <person name="Bailey A.M."/>
            <person name="Willis C.L."/>
            <person name="Cox R.J."/>
            <person name="Simpson T.J."/>
        </authorList>
    </citation>
    <scope>NUCLEOTIDE SEQUENCE [GENOMIC DNA]</scope>
    <scope>FUNCTION</scope>
    <source>
        <strain>K5013</strain>
    </source>
</reference>
<keyword id="KW-0238">DNA-binding</keyword>
<keyword id="KW-0539">Nucleus</keyword>
<keyword id="KW-0804">Transcription</keyword>
<keyword id="KW-0805">Transcription regulation</keyword>
<organism>
    <name type="scientific">Paecilomyces divaricatus</name>
    <name type="common">Penicillium divaricatum</name>
    <dbReference type="NCBI Taxonomy" id="644132"/>
    <lineage>
        <taxon>Eukaryota</taxon>
        <taxon>Fungi</taxon>
        <taxon>Dikarya</taxon>
        <taxon>Ascomycota</taxon>
        <taxon>Pezizomycotina</taxon>
        <taxon>Eurotiomycetes</taxon>
        <taxon>Eurotiomycetidae</taxon>
        <taxon>Eurotiales</taxon>
        <taxon>Thermoascaceae</taxon>
        <taxon>Paecilomyces</taxon>
    </lineage>
</organism>
<gene>
    <name evidence="3" type="primary">AgnL9</name>
</gene>
<name>AGN9_PAEDI</name>
<proteinExistence type="predicted"/>
<dbReference type="EMBL" id="MH898872">
    <property type="protein sequence ID" value="QBG38879.1"/>
    <property type="molecule type" value="Genomic_DNA"/>
</dbReference>
<dbReference type="SMR" id="A0A411PQN9"/>
<dbReference type="GO" id="GO:0005634">
    <property type="term" value="C:nucleus"/>
    <property type="evidence" value="ECO:0007669"/>
    <property type="project" value="UniProtKB-SubCell"/>
</dbReference>
<dbReference type="GO" id="GO:0003677">
    <property type="term" value="F:DNA binding"/>
    <property type="evidence" value="ECO:0007669"/>
    <property type="project" value="UniProtKB-KW"/>
</dbReference>
<dbReference type="Gene3D" id="3.40.50.150">
    <property type="entry name" value="Vaccinia Virus protein VP39"/>
    <property type="match status" value="1"/>
</dbReference>
<dbReference type="Gene3D" id="1.10.10.10">
    <property type="entry name" value="Winged helix-like DNA-binding domain superfamily/Winged helix DNA-binding domain"/>
    <property type="match status" value="1"/>
</dbReference>
<dbReference type="InterPro" id="IPR029063">
    <property type="entry name" value="SAM-dependent_MTases_sf"/>
</dbReference>
<dbReference type="InterPro" id="IPR036388">
    <property type="entry name" value="WH-like_DNA-bd_sf"/>
</dbReference>
<dbReference type="InterPro" id="IPR036390">
    <property type="entry name" value="WH_DNA-bd_sf"/>
</dbReference>
<dbReference type="PANTHER" id="PTHR43712:SF15">
    <property type="entry name" value="MONODICTYPHENONE CLUSTER TRANSCRIPTIONAL COACTIVATOR MDPA"/>
    <property type="match status" value="1"/>
</dbReference>
<dbReference type="PANTHER" id="PTHR43712">
    <property type="entry name" value="PUTATIVE (AFU_ORTHOLOGUE AFUA_4G14580)-RELATED"/>
    <property type="match status" value="1"/>
</dbReference>
<dbReference type="SUPFAM" id="SSF46785">
    <property type="entry name" value="Winged helix' DNA-binding domain"/>
    <property type="match status" value="1"/>
</dbReference>
<evidence type="ECO:0000255" key="1">
    <source>
        <dbReference type="PROSITE-ProRule" id="PRU00393"/>
    </source>
</evidence>
<evidence type="ECO:0000269" key="2">
    <source>
    </source>
</evidence>
<evidence type="ECO:0000303" key="3">
    <source>
    </source>
</evidence>
<evidence type="ECO:0000305" key="4"/>
<protein>
    <recommendedName>
        <fullName evidence="3">Agnestins biosynthesis cluster transcriptional coactivator AgnL9</fullName>
    </recommendedName>
    <alternativeName>
        <fullName evidence="3">Agnestins biosynthesis cluster protein L9</fullName>
    </alternativeName>
</protein>